<name>TRM10_YEAST</name>
<reference key="1">
    <citation type="journal article" date="1995" name="Yeast">
        <title>A 29.425 kb segment on the left arm of yeast chromosome XV contains more than twice as many unknown as known open reading frames.</title>
        <authorList>
            <person name="Zumstein E."/>
            <person name="Pearson B.M."/>
            <person name="Kalogeropoulos A."/>
            <person name="Schweizer M."/>
        </authorList>
    </citation>
    <scope>NUCLEOTIDE SEQUENCE [GENOMIC DNA]</scope>
    <source>
        <strain>ATCC 96604 / S288c / FY1679</strain>
    </source>
</reference>
<reference key="2">
    <citation type="journal article" date="1997" name="Nature">
        <title>The nucleotide sequence of Saccharomyces cerevisiae chromosome XV.</title>
        <authorList>
            <person name="Dujon B."/>
            <person name="Albermann K."/>
            <person name="Aldea M."/>
            <person name="Alexandraki D."/>
            <person name="Ansorge W."/>
            <person name="Arino J."/>
            <person name="Benes V."/>
            <person name="Bohn C."/>
            <person name="Bolotin-Fukuhara M."/>
            <person name="Bordonne R."/>
            <person name="Boyer J."/>
            <person name="Camasses A."/>
            <person name="Casamayor A."/>
            <person name="Casas C."/>
            <person name="Cheret G."/>
            <person name="Cziepluch C."/>
            <person name="Daignan-Fornier B."/>
            <person name="Dang V.-D."/>
            <person name="de Haan M."/>
            <person name="Delius H."/>
            <person name="Durand P."/>
            <person name="Fairhead C."/>
            <person name="Feldmann H."/>
            <person name="Gaillon L."/>
            <person name="Galisson F."/>
            <person name="Gamo F.-J."/>
            <person name="Gancedo C."/>
            <person name="Goffeau A."/>
            <person name="Goulding S.E."/>
            <person name="Grivell L.A."/>
            <person name="Habbig B."/>
            <person name="Hand N.J."/>
            <person name="Hani J."/>
            <person name="Hattenhorst U."/>
            <person name="Hebling U."/>
            <person name="Hernando Y."/>
            <person name="Herrero E."/>
            <person name="Heumann K."/>
            <person name="Hiesel R."/>
            <person name="Hilger F."/>
            <person name="Hofmann B."/>
            <person name="Hollenberg C.P."/>
            <person name="Hughes B."/>
            <person name="Jauniaux J.-C."/>
            <person name="Kalogeropoulos A."/>
            <person name="Katsoulou C."/>
            <person name="Kordes E."/>
            <person name="Lafuente M.J."/>
            <person name="Landt O."/>
            <person name="Louis E.J."/>
            <person name="Maarse A.C."/>
            <person name="Madania A."/>
            <person name="Mannhaupt G."/>
            <person name="Marck C."/>
            <person name="Martin R.P."/>
            <person name="Mewes H.-W."/>
            <person name="Michaux G."/>
            <person name="Paces V."/>
            <person name="Parle-McDermott A.G."/>
            <person name="Pearson B.M."/>
            <person name="Perrin A."/>
            <person name="Pettersson B."/>
            <person name="Poch O."/>
            <person name="Pohl T.M."/>
            <person name="Poirey R."/>
            <person name="Portetelle D."/>
            <person name="Pujol A."/>
            <person name="Purnelle B."/>
            <person name="Ramezani Rad M."/>
            <person name="Rechmann S."/>
            <person name="Schwager C."/>
            <person name="Schweizer M."/>
            <person name="Sor F."/>
            <person name="Sterky F."/>
            <person name="Tarassov I.A."/>
            <person name="Teodoru C."/>
            <person name="Tettelin H."/>
            <person name="Thierry A."/>
            <person name="Tobiasch E."/>
            <person name="Tzermia M."/>
            <person name="Uhlen M."/>
            <person name="Unseld M."/>
            <person name="Valens M."/>
            <person name="Vandenbol M."/>
            <person name="Vetter I."/>
            <person name="Vlcek C."/>
            <person name="Voet M."/>
            <person name="Volckaert G."/>
            <person name="Voss H."/>
            <person name="Wambutt R."/>
            <person name="Wedler H."/>
            <person name="Wiemann S."/>
            <person name="Winsor B."/>
            <person name="Wolfe K.H."/>
            <person name="Zollner A."/>
            <person name="Zumstein E."/>
            <person name="Kleine K."/>
        </authorList>
    </citation>
    <scope>NUCLEOTIDE SEQUENCE [LARGE SCALE GENOMIC DNA]</scope>
    <source>
        <strain>ATCC 204508 / S288c</strain>
    </source>
</reference>
<reference key="3">
    <citation type="journal article" date="2014" name="G3 (Bethesda)">
        <title>The reference genome sequence of Saccharomyces cerevisiae: Then and now.</title>
        <authorList>
            <person name="Engel S.R."/>
            <person name="Dietrich F.S."/>
            <person name="Fisk D.G."/>
            <person name="Binkley G."/>
            <person name="Balakrishnan R."/>
            <person name="Costanzo M.C."/>
            <person name="Dwight S.S."/>
            <person name="Hitz B.C."/>
            <person name="Karra K."/>
            <person name="Nash R.S."/>
            <person name="Weng S."/>
            <person name="Wong E.D."/>
            <person name="Lloyd P."/>
            <person name="Skrzypek M.S."/>
            <person name="Miyasato S.R."/>
            <person name="Simison M."/>
            <person name="Cherry J.M."/>
        </authorList>
    </citation>
    <scope>GENOME REANNOTATION</scope>
    <source>
        <strain>ATCC 204508 / S288c</strain>
    </source>
</reference>
<reference key="4">
    <citation type="journal article" date="2003" name="Nature">
        <title>Global analysis of protein localization in budding yeast.</title>
        <authorList>
            <person name="Huh W.-K."/>
            <person name="Falvo J.V."/>
            <person name="Gerke L.C."/>
            <person name="Carroll A.S."/>
            <person name="Howson R.W."/>
            <person name="Weissman J.S."/>
            <person name="O'Shea E.K."/>
        </authorList>
    </citation>
    <scope>SUBCELLULAR LOCATION [LARGE SCALE ANALYSIS]</scope>
</reference>
<reference key="5">
    <citation type="journal article" date="2003" name="Nature">
        <title>Global analysis of protein expression in yeast.</title>
        <authorList>
            <person name="Ghaemmaghami S."/>
            <person name="Huh W.-K."/>
            <person name="Bower K."/>
            <person name="Howson R.W."/>
            <person name="Belle A."/>
            <person name="Dephoure N."/>
            <person name="O'Shea E.K."/>
            <person name="Weissman J.S."/>
        </authorList>
    </citation>
    <scope>LEVEL OF PROTEIN EXPRESSION [LARGE SCALE ANALYSIS]</scope>
</reference>
<reference key="6">
    <citation type="journal article" date="2003" name="RNA">
        <title>Identification of the yeast gene encoding the tRNA m1G methyltransferase responsible for modification at position 9.</title>
        <authorList>
            <person name="Jackman J.E."/>
            <person name="Montange R.K."/>
            <person name="Malik H.S."/>
            <person name="Phizicky E.M."/>
        </authorList>
    </citation>
    <scope>FUNCTION</scope>
    <scope>CATALYTIC ACTIVITY</scope>
</reference>
<reference key="7">
    <citation type="journal article" date="2005" name="Nucleic Acids Res.">
        <title>Detection and discovery of RNA modifications using microarrays.</title>
        <authorList>
            <person name="Hiley S.L."/>
            <person name="Jackman J.E."/>
            <person name="Babak T."/>
            <person name="Trochesset M."/>
            <person name="Morris Q.D."/>
            <person name="Phizicky E.M."/>
            <person name="Hughes T.R."/>
        </authorList>
    </citation>
    <scope>FUNCTION</scope>
</reference>
<reference key="8">
    <citation type="journal article" date="2008" name="Mol. Cell. Proteomics">
        <title>A multidimensional chromatography technology for in-depth phosphoproteome analysis.</title>
        <authorList>
            <person name="Albuquerque C.P."/>
            <person name="Smolka M.B."/>
            <person name="Payne S.H."/>
            <person name="Bafna V."/>
            <person name="Eng J."/>
            <person name="Zhou H."/>
        </authorList>
    </citation>
    <scope>PHOSPHORYLATION [LARGE SCALE ANALYSIS] AT THR-16</scope>
    <scope>IDENTIFICATION BY MASS SPECTROMETRY [LARGE SCALE ANALYSIS]</scope>
</reference>
<reference key="9">
    <citation type="journal article" date="2009" name="Science">
        <title>Global analysis of Cdk1 substrate phosphorylation sites provides insights into evolution.</title>
        <authorList>
            <person name="Holt L.J."/>
            <person name="Tuch B.B."/>
            <person name="Villen J."/>
            <person name="Johnson A.D."/>
            <person name="Gygi S.P."/>
            <person name="Morgan D.O."/>
        </authorList>
    </citation>
    <scope>PHOSPHORYLATION [LARGE SCALE ANALYSIS] AT SER-283</scope>
    <scope>IDENTIFICATION BY MASS SPECTROMETRY [LARGE SCALE ANALYSIS]</scope>
</reference>
<reference key="10">
    <citation type="journal article" date="2012" name="Proc. Natl. Acad. Sci. U.S.A.">
        <title>N-terminal acetylome analyses and functional insights of the N-terminal acetyltransferase NatB.</title>
        <authorList>
            <person name="Van Damme P."/>
            <person name="Lasa M."/>
            <person name="Polevoda B."/>
            <person name="Gazquez C."/>
            <person name="Elosegui-Artola A."/>
            <person name="Kim D.S."/>
            <person name="De Juan-Pardo E."/>
            <person name="Demeyer K."/>
            <person name="Hole K."/>
            <person name="Larrea E."/>
            <person name="Timmerman E."/>
            <person name="Prieto J."/>
            <person name="Arnesen T."/>
            <person name="Sherman F."/>
            <person name="Gevaert K."/>
            <person name="Aldabe R."/>
        </authorList>
    </citation>
    <scope>IDENTIFICATION BY MASS SPECTROMETRY [LARGE SCALE ANALYSIS]</scope>
</reference>
<reference key="11">
    <citation type="journal article" date="2013" name="RNA">
        <title>Unexpected expansion of tRNA substrate recognition by the yeast m1G9 methyltransferase Trm10.</title>
        <authorList>
            <person name="Swinehart W.E."/>
            <person name="Henderson J.C."/>
            <person name="Jackman J.E."/>
        </authorList>
    </citation>
    <scope>FUNCTION</scope>
    <scope>CATALYTIC ACTIVITY</scope>
    <scope>BIOPHYSICOCHEMICAL PROPERTIES</scope>
</reference>
<reference key="12">
    <citation type="journal article" date="2014" name="Nucleic Acids Res.">
        <title>Crystal structure of tRNA m1G9 methyltransferase Trm10: insight into the catalytic mechanism and recognition of tRNA substrate.</title>
        <authorList>
            <person name="Shao Z."/>
            <person name="Yan W."/>
            <person name="Peng J."/>
            <person name="Zuo X."/>
            <person name="Zou Y."/>
            <person name="Li F."/>
            <person name="Gong D."/>
            <person name="Ma R."/>
            <person name="Wu J."/>
            <person name="Shi Y."/>
            <person name="Zhang Z."/>
            <person name="Teng M."/>
            <person name="Li X."/>
            <person name="Gong Q."/>
        </authorList>
    </citation>
    <scope>X-RAY CRYSTALLOGRAPHY (1.76 ANGSTROMS) OF 84-276 IN COMPLEX WITH S-ADENOSYL-L-HOMOCYSTEINE</scope>
    <scope>FUNCTION</scope>
    <scope>CATALYTIC ACTIVITY</scope>
    <scope>ACTIVE SITE</scope>
    <scope>MUTAGENESIS OF GLN-118; VAL-209; ASP-210; LYS-211; ASN-212 AND THR-247</scope>
</reference>
<accession>Q12400</accession>
<accession>D6W1X5</accession>
<protein>
    <recommendedName>
        <fullName evidence="12">tRNA (guanine(9)-N1)-methyltransferase</fullName>
        <ecNumber evidence="5 9">2.1.1.221</ecNumber>
    </recommendedName>
    <alternativeName>
        <fullName evidence="11">tRNA methyltransferase 10</fullName>
    </alternativeName>
    <alternativeName>
        <fullName evidence="11">tRNA(m1G9)-methyltransferase</fullName>
        <shortName evidence="11">tRNA(m1G9)MTase</shortName>
    </alternativeName>
</protein>
<organism>
    <name type="scientific">Saccharomyces cerevisiae (strain ATCC 204508 / S288c)</name>
    <name type="common">Baker's yeast</name>
    <dbReference type="NCBI Taxonomy" id="559292"/>
    <lineage>
        <taxon>Eukaryota</taxon>
        <taxon>Fungi</taxon>
        <taxon>Dikarya</taxon>
        <taxon>Ascomycota</taxon>
        <taxon>Saccharomycotina</taxon>
        <taxon>Saccharomycetes</taxon>
        <taxon>Saccharomycetales</taxon>
        <taxon>Saccharomycetaceae</taxon>
        <taxon>Saccharomyces</taxon>
    </lineage>
</organism>
<keyword id="KW-0002">3D-structure</keyword>
<keyword id="KW-0175">Coiled coil</keyword>
<keyword id="KW-0963">Cytoplasm</keyword>
<keyword id="KW-0489">Methyltransferase</keyword>
<keyword id="KW-0539">Nucleus</keyword>
<keyword id="KW-0597">Phosphoprotein</keyword>
<keyword id="KW-1185">Reference proteome</keyword>
<keyword id="KW-0949">S-adenosyl-L-methionine</keyword>
<keyword id="KW-0808">Transferase</keyword>
<keyword id="KW-0819">tRNA processing</keyword>
<comment type="function">
    <text evidence="5 8 9">S-adenosyl-L-methionine-dependent guanine N(1)-methyltransferase that catalyzes the formation of N(1)-methylguanine at position 9 (m1G9) in cytoplasmic tRNAs.</text>
</comment>
<comment type="catalytic activity">
    <reaction evidence="5 9">
        <text>guanosine(9) in tRNA + S-adenosyl-L-methionine = N(1)-methylguanosine(9) in tRNA + S-adenosyl-L-homocysteine + H(+)</text>
        <dbReference type="Rhea" id="RHEA:43156"/>
        <dbReference type="Rhea" id="RHEA-COMP:10367"/>
        <dbReference type="Rhea" id="RHEA-COMP:10368"/>
        <dbReference type="ChEBI" id="CHEBI:15378"/>
        <dbReference type="ChEBI" id="CHEBI:57856"/>
        <dbReference type="ChEBI" id="CHEBI:59789"/>
        <dbReference type="ChEBI" id="CHEBI:73542"/>
        <dbReference type="ChEBI" id="CHEBI:74269"/>
        <dbReference type="EC" id="2.1.1.221"/>
    </reaction>
</comment>
<comment type="biophysicochemical properties">
    <kinetics>
        <KM evidence="9">2400 nM for tRNA(Gly GCC)</KM>
        <KM evidence="9">1860 nM for tRNA(Val UAC)</KM>
        <text evidence="9">kcat is 0.54 min(-1) for tRNA(Gly GCC) and 0.31 min(-1) for tRNA(Val UAC) (m1G9)-methylation, respectively.</text>
    </kinetics>
</comment>
<comment type="subunit">
    <text evidence="1">Monomer.</text>
</comment>
<comment type="subcellular location">
    <subcellularLocation>
        <location evidence="6">Cytoplasm</location>
    </subcellularLocation>
    <subcellularLocation>
        <location evidence="6">Nucleus</location>
    </subcellularLocation>
</comment>
<comment type="miscellaneous">
    <text evidence="7">Present with 4090 molecules/cell in log phase SD medium.</text>
</comment>
<comment type="similarity">
    <text evidence="3">Belongs to the class IV-like SAM-binding methyltransferase superfamily. TRM10 family.</text>
</comment>
<feature type="chain" id="PRO_0000060520" description="tRNA (guanine(9)-N1)-methyltransferase">
    <location>
        <begin position="1"/>
        <end position="293"/>
    </location>
</feature>
<feature type="domain" description="SAM-dependent MTase TRM10-type" evidence="3">
    <location>
        <begin position="83"/>
        <end position="279"/>
    </location>
</feature>
<feature type="region of interest" description="Disordered" evidence="4">
    <location>
        <begin position="1"/>
        <end position="31"/>
    </location>
</feature>
<feature type="coiled-coil region" evidence="2">
    <location>
        <begin position="32"/>
        <end position="61"/>
    </location>
</feature>
<feature type="active site" description="Proton acceptor" evidence="10">
    <location>
        <position position="210"/>
    </location>
</feature>
<feature type="binding site">
    <location>
        <begin position="186"/>
        <end position="187"/>
    </location>
    <ligand>
        <name>S-adenosyl-L-methionine</name>
        <dbReference type="ChEBI" id="CHEBI:59789"/>
    </ligand>
</feature>
<feature type="binding site">
    <location>
        <position position="206"/>
    </location>
    <ligand>
        <name>S-adenosyl-L-methionine</name>
        <dbReference type="ChEBI" id="CHEBI:59789"/>
    </ligand>
</feature>
<feature type="binding site">
    <location>
        <begin position="210"/>
        <end position="214"/>
    </location>
    <ligand>
        <name>S-adenosyl-L-methionine</name>
        <dbReference type="ChEBI" id="CHEBI:59789"/>
    </ligand>
</feature>
<feature type="binding site">
    <location>
        <position position="218"/>
    </location>
    <ligand>
        <name>S-adenosyl-L-methionine</name>
        <dbReference type="ChEBI" id="CHEBI:59789"/>
    </ligand>
</feature>
<feature type="binding site">
    <location>
        <position position="232"/>
    </location>
    <ligand>
        <name>S-adenosyl-L-methionine</name>
        <dbReference type="ChEBI" id="CHEBI:59789"/>
    </ligand>
</feature>
<feature type="binding site">
    <location>
        <begin position="244"/>
        <end position="246"/>
    </location>
    <ligand>
        <name>S-adenosyl-L-methionine</name>
        <dbReference type="ChEBI" id="CHEBI:59789"/>
    </ligand>
</feature>
<feature type="modified residue" description="Phosphothreonine" evidence="14">
    <location>
        <position position="16"/>
    </location>
</feature>
<feature type="modified residue" description="Phosphoserine" evidence="15">
    <location>
        <position position="283"/>
    </location>
</feature>
<feature type="mutagenesis site" description="Completely abolishes catalytic activity." evidence="10">
    <original>Q</original>
    <variation>A</variation>
    <location>
        <position position="118"/>
    </location>
</feature>
<feature type="mutagenesis site" description="Reduces catalytic activity." evidence="10">
    <original>V</original>
    <variation>A</variation>
    <location>
        <position position="209"/>
    </location>
</feature>
<feature type="mutagenesis site" description="Completely abolishes catalytic activity." evidence="10">
    <original>D</original>
    <variation>N</variation>
    <location>
        <position position="210"/>
    </location>
</feature>
<feature type="mutagenesis site" description="Reduces catalytic activity." evidence="10">
    <original>K</original>
    <variation>A</variation>
    <location>
        <position position="211"/>
    </location>
</feature>
<feature type="mutagenesis site" description="Has weaker affinity for S-adenosyl-L-methionine and reduces catalytic activity by 90%." evidence="10">
    <original>N</original>
    <variation>A</variation>
    <location>
        <position position="212"/>
    </location>
</feature>
<feature type="mutagenesis site" description="Reduces catalytic activity." evidence="10">
    <original>T</original>
    <variation>A</variation>
    <location>
        <position position="247"/>
    </location>
</feature>
<feature type="strand" evidence="16">
    <location>
        <begin position="91"/>
        <end position="100"/>
    </location>
</feature>
<feature type="helix" evidence="16">
    <location>
        <begin position="104"/>
        <end position="106"/>
    </location>
</feature>
<feature type="helix" evidence="16">
    <location>
        <begin position="109"/>
        <end position="128"/>
    </location>
</feature>
<feature type="strand" evidence="16">
    <location>
        <begin position="129"/>
        <end position="139"/>
    </location>
</feature>
<feature type="helix" evidence="16">
    <location>
        <begin position="142"/>
        <end position="150"/>
    </location>
</feature>
<feature type="helix" evidence="16">
    <location>
        <begin position="153"/>
        <end position="155"/>
    </location>
</feature>
<feature type="helix" evidence="16">
    <location>
        <begin position="157"/>
        <end position="159"/>
    </location>
</feature>
<feature type="strand" evidence="16">
    <location>
        <begin position="163"/>
        <end position="165"/>
    </location>
</feature>
<feature type="strand" evidence="16">
    <location>
        <begin position="167"/>
        <end position="169"/>
    </location>
</feature>
<feature type="helix" evidence="16">
    <location>
        <begin position="170"/>
        <end position="173"/>
    </location>
</feature>
<feature type="strand" evidence="16">
    <location>
        <begin position="176"/>
        <end position="178"/>
    </location>
</feature>
<feature type="helix" evidence="16">
    <location>
        <begin position="180"/>
        <end position="182"/>
    </location>
</feature>
<feature type="strand" evidence="16">
    <location>
        <begin position="183"/>
        <end position="186"/>
    </location>
</feature>
<feature type="strand" evidence="16">
    <location>
        <begin position="191"/>
        <end position="193"/>
    </location>
</feature>
<feature type="strand" evidence="16">
    <location>
        <begin position="202"/>
        <end position="206"/>
    </location>
</feature>
<feature type="helix" evidence="16">
    <location>
        <begin position="217"/>
        <end position="225"/>
    </location>
</feature>
<feature type="strand" evidence="16">
    <location>
        <begin position="229"/>
        <end position="231"/>
    </location>
</feature>
<feature type="helix" evidence="16">
    <location>
        <begin position="235"/>
        <end position="237"/>
    </location>
</feature>
<feature type="helix" evidence="16">
    <location>
        <begin position="248"/>
        <end position="258"/>
    </location>
</feature>
<feature type="turn" evidence="16">
    <location>
        <begin position="259"/>
        <end position="262"/>
    </location>
</feature>
<feature type="helix" evidence="16">
    <location>
        <begin position="264"/>
        <end position="271"/>
    </location>
</feature>
<evidence type="ECO:0000250" key="1">
    <source>
        <dbReference type="UniProtKB" id="O14214"/>
    </source>
</evidence>
<evidence type="ECO:0000255" key="2"/>
<evidence type="ECO:0000255" key="3">
    <source>
        <dbReference type="PROSITE-ProRule" id="PRU01012"/>
    </source>
</evidence>
<evidence type="ECO:0000256" key="4">
    <source>
        <dbReference type="SAM" id="MobiDB-lite"/>
    </source>
</evidence>
<evidence type="ECO:0000269" key="5">
    <source>
    </source>
</evidence>
<evidence type="ECO:0000269" key="6">
    <source>
    </source>
</evidence>
<evidence type="ECO:0000269" key="7">
    <source>
    </source>
</evidence>
<evidence type="ECO:0000269" key="8">
    <source>
    </source>
</evidence>
<evidence type="ECO:0000269" key="9">
    <source>
    </source>
</evidence>
<evidence type="ECO:0000269" key="10">
    <source>
    </source>
</evidence>
<evidence type="ECO:0000303" key="11">
    <source>
    </source>
</evidence>
<evidence type="ECO:0000305" key="12">
    <source>
    </source>
</evidence>
<evidence type="ECO:0000312" key="13">
    <source>
        <dbReference type="SGD" id="S000005453"/>
    </source>
</evidence>
<evidence type="ECO:0007744" key="14">
    <source>
    </source>
</evidence>
<evidence type="ECO:0007744" key="15">
    <source>
    </source>
</evidence>
<evidence type="ECO:0007829" key="16">
    <source>
        <dbReference type="PDB" id="4JWJ"/>
    </source>
</evidence>
<sequence>MSNDEINQNEEKVKRTPPLPPVPEGMSKKQWKKMCKRQRWEENKAKYNAERRVKKKRLRHERSAKIQEYIDRGEEVPQELIREPRINVNQTDSGIEIILDCSFDELMNDKEIVSLSNQVTRAYSANRRANHFAEIKVAPFDKRLKQRFETTLKNTNYENWNHFKFLPDDKIMFGDEHISKDKIVYLTADTEEKLEKLEPGMRYIVGGIVDKNRYKELCLKKAQKMGIPTRRLPIDEYINLEGRRVLTTTHVVQLMLKYFDDHNWKNAFESVLPPRKLDAEAKSASSSPAPKDT</sequence>
<gene>
    <name evidence="11" type="primary">TRM10</name>
    <name evidence="13" type="ordered locus">YOL093W</name>
    <name type="ORF">O0926</name>
</gene>
<dbReference type="EC" id="2.1.1.221" evidence="5 9"/>
<dbReference type="EMBL" id="X83121">
    <property type="protein sequence ID" value="CAA58186.1"/>
    <property type="molecule type" value="Genomic_DNA"/>
</dbReference>
<dbReference type="EMBL" id="Z74835">
    <property type="protein sequence ID" value="CAA99105.1"/>
    <property type="molecule type" value="Genomic_DNA"/>
</dbReference>
<dbReference type="EMBL" id="BK006948">
    <property type="protein sequence ID" value="DAA10691.1"/>
    <property type="molecule type" value="Genomic_DNA"/>
</dbReference>
<dbReference type="PIR" id="S57376">
    <property type="entry name" value="S57376"/>
</dbReference>
<dbReference type="RefSeq" id="NP_014548.1">
    <property type="nucleotide sequence ID" value="NM_001183347.1"/>
</dbReference>
<dbReference type="PDB" id="4JWJ">
    <property type="method" value="X-ray"/>
    <property type="resolution" value="1.76 A"/>
    <property type="chains" value="A/B=84-276"/>
</dbReference>
<dbReference type="PDBsum" id="4JWJ"/>
<dbReference type="SMR" id="Q12400"/>
<dbReference type="BioGRID" id="34309">
    <property type="interactions" value="96"/>
</dbReference>
<dbReference type="DIP" id="DIP-4737N"/>
<dbReference type="FunCoup" id="Q12400">
    <property type="interactions" value="881"/>
</dbReference>
<dbReference type="IntAct" id="Q12400">
    <property type="interactions" value="2"/>
</dbReference>
<dbReference type="MINT" id="Q12400"/>
<dbReference type="STRING" id="4932.YOL093W"/>
<dbReference type="iPTMnet" id="Q12400"/>
<dbReference type="PaxDb" id="4932-YOL093W"/>
<dbReference type="PeptideAtlas" id="Q12400"/>
<dbReference type="EnsemblFungi" id="YOL093W_mRNA">
    <property type="protein sequence ID" value="YOL093W"/>
    <property type="gene ID" value="YOL093W"/>
</dbReference>
<dbReference type="GeneID" id="854060"/>
<dbReference type="KEGG" id="sce:YOL093W"/>
<dbReference type="AGR" id="SGD:S000005453"/>
<dbReference type="SGD" id="S000005453">
    <property type="gene designation" value="TRM10"/>
</dbReference>
<dbReference type="VEuPathDB" id="FungiDB:YOL093W"/>
<dbReference type="eggNOG" id="KOG2967">
    <property type="taxonomic scope" value="Eukaryota"/>
</dbReference>
<dbReference type="GeneTree" id="ENSGT00530000063169"/>
<dbReference type="HOGENOM" id="CLU_034384_1_0_1"/>
<dbReference type="InParanoid" id="Q12400"/>
<dbReference type="OMA" id="FKKNDGW"/>
<dbReference type="OrthoDB" id="278300at2759"/>
<dbReference type="BioCyc" id="MetaCyc:G3O-33493-MONOMER"/>
<dbReference type="BioCyc" id="YEAST:G3O-33493-MONOMER"/>
<dbReference type="BRENDA" id="2.1.1.221">
    <property type="organism ID" value="984"/>
</dbReference>
<dbReference type="BioGRID-ORCS" id="854060">
    <property type="hits" value="3 hits in 10 CRISPR screens"/>
</dbReference>
<dbReference type="EvolutionaryTrace" id="Q12400"/>
<dbReference type="PRO" id="PR:Q12400"/>
<dbReference type="Proteomes" id="UP000002311">
    <property type="component" value="Chromosome XV"/>
</dbReference>
<dbReference type="RNAct" id="Q12400">
    <property type="molecule type" value="protein"/>
</dbReference>
<dbReference type="GO" id="GO:0005737">
    <property type="term" value="C:cytoplasm"/>
    <property type="evidence" value="ECO:0007005"/>
    <property type="project" value="SGD"/>
</dbReference>
<dbReference type="GO" id="GO:0005654">
    <property type="term" value="C:nucleoplasm"/>
    <property type="evidence" value="ECO:0000304"/>
    <property type="project" value="Reactome"/>
</dbReference>
<dbReference type="GO" id="GO:0005634">
    <property type="term" value="C:nucleus"/>
    <property type="evidence" value="ECO:0007005"/>
    <property type="project" value="SGD"/>
</dbReference>
<dbReference type="GO" id="GO:0016423">
    <property type="term" value="F:tRNA (guanine) methyltransferase activity"/>
    <property type="evidence" value="ECO:0000314"/>
    <property type="project" value="SGD"/>
</dbReference>
<dbReference type="GO" id="GO:0052905">
    <property type="term" value="F:tRNA (guanosine(9)-N1)-methyltransferase activity"/>
    <property type="evidence" value="ECO:0000269"/>
    <property type="project" value="Reactome"/>
</dbReference>
<dbReference type="GO" id="GO:0000049">
    <property type="term" value="F:tRNA binding"/>
    <property type="evidence" value="ECO:0000318"/>
    <property type="project" value="GO_Central"/>
</dbReference>
<dbReference type="GO" id="GO:0030488">
    <property type="term" value="P:tRNA methylation"/>
    <property type="evidence" value="ECO:0000314"/>
    <property type="project" value="SGD"/>
</dbReference>
<dbReference type="GO" id="GO:0006400">
    <property type="term" value="P:tRNA modification"/>
    <property type="evidence" value="ECO:0000304"/>
    <property type="project" value="Reactome"/>
</dbReference>
<dbReference type="GO" id="GO:0002939">
    <property type="term" value="P:tRNA N1-guanine methylation"/>
    <property type="evidence" value="ECO:0000318"/>
    <property type="project" value="GO_Central"/>
</dbReference>
<dbReference type="CDD" id="cd18089">
    <property type="entry name" value="SPOUT_Trm10-like"/>
    <property type="match status" value="1"/>
</dbReference>
<dbReference type="FunFam" id="3.40.1280.30:FF:000004">
    <property type="entry name" value="tRNA (guanine(9)-N1)-methyltransferase"/>
    <property type="match status" value="1"/>
</dbReference>
<dbReference type="Gene3D" id="3.40.1280.30">
    <property type="match status" value="1"/>
</dbReference>
<dbReference type="InterPro" id="IPR028564">
    <property type="entry name" value="MT_TRM10-typ"/>
</dbReference>
<dbReference type="InterPro" id="IPR038459">
    <property type="entry name" value="MT_TRM10-typ_sf"/>
</dbReference>
<dbReference type="InterPro" id="IPR016653">
    <property type="entry name" value="TRM10/TRM10A"/>
</dbReference>
<dbReference type="InterPro" id="IPR007356">
    <property type="entry name" value="tRNA_m1G_MeTrfase_euk"/>
</dbReference>
<dbReference type="InterPro" id="IPR016009">
    <property type="entry name" value="tRNA_MeTrfase_TRMD/TRM10"/>
</dbReference>
<dbReference type="PANTHER" id="PTHR13563">
    <property type="entry name" value="TRNA (GUANINE-9-) METHYLTRANSFERASE"/>
    <property type="match status" value="1"/>
</dbReference>
<dbReference type="PANTHER" id="PTHR13563:SF13">
    <property type="entry name" value="TRNA METHYLTRANSFERASE 10 HOMOLOG A"/>
    <property type="match status" value="1"/>
</dbReference>
<dbReference type="Pfam" id="PF01746">
    <property type="entry name" value="tRNA_m1G_MT"/>
    <property type="match status" value="1"/>
</dbReference>
<dbReference type="PIRSF" id="PIRSF016323">
    <property type="entry name" value="tRNA_m1G_mtfrase_met"/>
    <property type="match status" value="1"/>
</dbReference>
<dbReference type="PROSITE" id="PS51675">
    <property type="entry name" value="SAM_MT_TRM10"/>
    <property type="match status" value="1"/>
</dbReference>
<proteinExistence type="evidence at protein level"/>